<gene>
    <name type="primary">recF</name>
</gene>
<reference key="1">
    <citation type="journal article" date="1992" name="Nucleic Acids Res.">
        <title>recF in Actinobacillus pleuropneumoniae.</title>
        <authorList>
            <person name="Loynds B.M."/>
            <person name="Langford P.R."/>
            <person name="Kroll J.S."/>
        </authorList>
    </citation>
    <scope>NUCLEOTIDE SEQUENCE [GENOMIC DNA]</scope>
    <source>
        <strain>Serotype III / Isolate 1421 (Nielsen)</strain>
    </source>
</reference>
<reference key="2">
    <citation type="submission" date="1996-07" db="EMBL/GenBank/DDBJ databases">
        <authorList>
            <person name="Langford P.R."/>
            <person name="Loynds B.M."/>
            <person name="Kroll J.S."/>
        </authorList>
    </citation>
    <scope>NUCLEOTIDE SEQUENCE [GENOMIC DNA] OF 347-360</scope>
    <source>
        <strain>Serotype III / Isolate 1421 (Nielsen)</strain>
    </source>
</reference>
<reference key="3">
    <citation type="submission" date="1996-03" db="EMBL/GenBank/DDBJ databases">
        <title>Cloning, sequencing and overproduction of Mn-SOD and Cu,Zn-SOD of Actinobacillus pleuropneumoniae.</title>
        <authorList>
            <person name="Helie M.C."/>
            <person name="Sirois M."/>
            <person name="Ouellet C."/>
            <person name="Boissinot M."/>
        </authorList>
    </citation>
    <scope>NUCLEOTIDE SEQUENCE [GENOMIC DNA] OF 249-360</scope>
    <source>
        <strain>ATCC 27088 / DSM 13472 / CCM 5869 / S4074 / Serotype 1</strain>
    </source>
</reference>
<accession>P24718</accession>
<accession>Q59132</accession>
<sequence>MPLSRLIINNFRNLQSLDLELSPNFNFIVGHNGSGKTSLLEAIFYLGHGRSFKSHISNRIIHYQAEDFVLHARIDEGQHQWSVGIQKKRSGDTLLKINGEDGNKISDLAHLLPMQVITPEGLTLLNGGPTFRRAFLDWGLFHQYTEFYSCWANLKRLLKQRNAALHQVRSYAELKPWDIELAKLAEIVSQMRASYAEGLRPEIEKTCQFFLPELEIGVSFHQGWEKGTDYAEILAQGFERDKAMGYTMIGPQKADFRFRANGLPVEDVLSRGQLKLLMCALRLAQGEYLVAQKERQCLFLIDDFASELDPIKRELLAHRLRESGSQVFVTAITKDQLNQMQWQESEQDSLFQVQQGMLTK</sequence>
<name>RECF_ACTPL</name>
<protein>
    <recommendedName>
        <fullName>DNA replication and repair protein RecF</fullName>
    </recommendedName>
</protein>
<feature type="chain" id="PRO_0000196390" description="DNA replication and repair protein RecF">
    <location>
        <begin position="1"/>
        <end position="360"/>
    </location>
</feature>
<feature type="binding site" evidence="2">
    <location>
        <begin position="30"/>
        <end position="37"/>
    </location>
    <ligand>
        <name>ATP</name>
        <dbReference type="ChEBI" id="CHEBI:30616"/>
    </ligand>
</feature>
<feature type="sequence conflict" description="In Ref. 3." evidence="3" ref="3">
    <original>I</original>
    <variation>M</variation>
    <location>
        <position position="249"/>
    </location>
</feature>
<organism>
    <name type="scientific">Actinobacillus pleuropneumoniae</name>
    <name type="common">Haemophilus pleuropneumoniae</name>
    <dbReference type="NCBI Taxonomy" id="715"/>
    <lineage>
        <taxon>Bacteria</taxon>
        <taxon>Pseudomonadati</taxon>
        <taxon>Pseudomonadota</taxon>
        <taxon>Gammaproteobacteria</taxon>
        <taxon>Pasteurellales</taxon>
        <taxon>Pasteurellaceae</taxon>
        <taxon>Actinobacillus</taxon>
    </lineage>
</organism>
<keyword id="KW-0067">ATP-binding</keyword>
<keyword id="KW-0963">Cytoplasm</keyword>
<keyword id="KW-0227">DNA damage</keyword>
<keyword id="KW-0234">DNA repair</keyword>
<keyword id="KW-0235">DNA replication</keyword>
<keyword id="KW-0238">DNA-binding</keyword>
<keyword id="KW-0547">Nucleotide-binding</keyword>
<keyword id="KW-0742">SOS response</keyword>
<evidence type="ECO:0000250" key="1"/>
<evidence type="ECO:0000255" key="2"/>
<evidence type="ECO:0000305" key="3"/>
<proteinExistence type="inferred from homology"/>
<comment type="function">
    <text>The RecF protein is involved in DNA metabolism; it is required for DNA replication and normal SOS inducibility. RecF binds preferentially to single-stranded, linear DNA. It also seems to bind ATP.</text>
</comment>
<comment type="subcellular location">
    <subcellularLocation>
        <location evidence="1">Cytoplasm</location>
    </subcellularLocation>
</comment>
<comment type="similarity">
    <text evidence="3">Belongs to the RecF family.</text>
</comment>
<dbReference type="EMBL" id="X63626">
    <property type="protein sequence ID" value="CAA45173.1"/>
    <property type="molecule type" value="Genomic_DNA"/>
</dbReference>
<dbReference type="EMBL" id="X99396">
    <property type="protein sequence ID" value="CAA67772.1"/>
    <property type="molecule type" value="Genomic_DNA"/>
</dbReference>
<dbReference type="EMBL" id="U51440">
    <property type="protein sequence ID" value="AAB02817.1"/>
    <property type="molecule type" value="Genomic_DNA"/>
</dbReference>
<dbReference type="PIR" id="S22814">
    <property type="entry name" value="S22814"/>
</dbReference>
<dbReference type="SMR" id="P24718"/>
<dbReference type="GO" id="GO:0005737">
    <property type="term" value="C:cytoplasm"/>
    <property type="evidence" value="ECO:0007669"/>
    <property type="project" value="UniProtKB-SubCell"/>
</dbReference>
<dbReference type="GO" id="GO:0005524">
    <property type="term" value="F:ATP binding"/>
    <property type="evidence" value="ECO:0007669"/>
    <property type="project" value="UniProtKB-UniRule"/>
</dbReference>
<dbReference type="GO" id="GO:0003697">
    <property type="term" value="F:single-stranded DNA binding"/>
    <property type="evidence" value="ECO:0007669"/>
    <property type="project" value="UniProtKB-UniRule"/>
</dbReference>
<dbReference type="GO" id="GO:0006260">
    <property type="term" value="P:DNA replication"/>
    <property type="evidence" value="ECO:0007669"/>
    <property type="project" value="UniProtKB-UniRule"/>
</dbReference>
<dbReference type="GO" id="GO:0000731">
    <property type="term" value="P:DNA synthesis involved in DNA repair"/>
    <property type="evidence" value="ECO:0007669"/>
    <property type="project" value="TreeGrafter"/>
</dbReference>
<dbReference type="GO" id="GO:0006302">
    <property type="term" value="P:double-strand break repair"/>
    <property type="evidence" value="ECO:0007669"/>
    <property type="project" value="TreeGrafter"/>
</dbReference>
<dbReference type="GO" id="GO:0009432">
    <property type="term" value="P:SOS response"/>
    <property type="evidence" value="ECO:0007669"/>
    <property type="project" value="UniProtKB-UniRule"/>
</dbReference>
<dbReference type="FunFam" id="1.20.1050.90:FF:000001">
    <property type="entry name" value="DNA replication and repair protein RecF"/>
    <property type="match status" value="1"/>
</dbReference>
<dbReference type="Gene3D" id="3.40.50.300">
    <property type="entry name" value="P-loop containing nucleotide triphosphate hydrolases"/>
    <property type="match status" value="1"/>
</dbReference>
<dbReference type="Gene3D" id="1.20.1050.90">
    <property type="entry name" value="RecF/RecN/SMC, N-terminal domain"/>
    <property type="match status" value="1"/>
</dbReference>
<dbReference type="HAMAP" id="MF_00365">
    <property type="entry name" value="RecF"/>
    <property type="match status" value="1"/>
</dbReference>
<dbReference type="InterPro" id="IPR001238">
    <property type="entry name" value="DNA-binding_RecF"/>
</dbReference>
<dbReference type="InterPro" id="IPR018078">
    <property type="entry name" value="DNA-binding_RecF_CS"/>
</dbReference>
<dbReference type="InterPro" id="IPR027417">
    <property type="entry name" value="P-loop_NTPase"/>
</dbReference>
<dbReference type="InterPro" id="IPR003395">
    <property type="entry name" value="RecF/RecN/SMC_N"/>
</dbReference>
<dbReference type="InterPro" id="IPR042174">
    <property type="entry name" value="RecF_2"/>
</dbReference>
<dbReference type="NCBIfam" id="TIGR00611">
    <property type="entry name" value="recf"/>
    <property type="match status" value="1"/>
</dbReference>
<dbReference type="PANTHER" id="PTHR32182">
    <property type="entry name" value="DNA REPLICATION AND REPAIR PROTEIN RECF"/>
    <property type="match status" value="1"/>
</dbReference>
<dbReference type="PANTHER" id="PTHR32182:SF0">
    <property type="entry name" value="DNA REPLICATION AND REPAIR PROTEIN RECF"/>
    <property type="match status" value="1"/>
</dbReference>
<dbReference type="Pfam" id="PF02463">
    <property type="entry name" value="SMC_N"/>
    <property type="match status" value="1"/>
</dbReference>
<dbReference type="SUPFAM" id="SSF52540">
    <property type="entry name" value="P-loop containing nucleoside triphosphate hydrolases"/>
    <property type="match status" value="1"/>
</dbReference>
<dbReference type="PROSITE" id="PS00617">
    <property type="entry name" value="RECF_1"/>
    <property type="match status" value="1"/>
</dbReference>
<dbReference type="PROSITE" id="PS00618">
    <property type="entry name" value="RECF_2"/>
    <property type="match status" value="1"/>
</dbReference>